<organism>
    <name type="scientific">Aspergillus oryzae (strain ATCC 42149 / RIB 40)</name>
    <name type="common">Yellow koji mold</name>
    <dbReference type="NCBI Taxonomy" id="510516"/>
    <lineage>
        <taxon>Eukaryota</taxon>
        <taxon>Fungi</taxon>
        <taxon>Dikarya</taxon>
        <taxon>Ascomycota</taxon>
        <taxon>Pezizomycotina</taxon>
        <taxon>Eurotiomycetes</taxon>
        <taxon>Eurotiomycetidae</taxon>
        <taxon>Eurotiales</taxon>
        <taxon>Aspergillaceae</taxon>
        <taxon>Aspergillus</taxon>
        <taxon>Aspergillus subgen. Circumdati</taxon>
    </lineage>
</organism>
<sequence length="545" mass="60098">MPSASWEDLAADKRARLEKSIPDEWKFKSVPIEGSVIDLPEKSGILSPSEIKITNSSATELVAQLANGTLKSVDVTLAFCKRAALAHQLVNCAHDFFPELALAQARELDRYFETHKKPVGPLHGLPISLKDQLRVKGTETCMAYISWLGKRDTSDSILTALLRKAGAVFLVKTSVPQTLMVCETVNNIIGRTSNPRNLNLSCGGSSGGEGAMIAMRGGAIGIGTDIGGSIRVPAAFNSLYGIRPSHGRLPYGGMTNSMEGQETIHSVVGPIAHSAQDVRLFLQSVLKEEPWKYDSKVIPLPWREAEENAAQAKIAEKSLNFAFYDFDGVVRPHPPITRGVEIVRSTLEKDGHTVAPWTPYKHAFAVDLANKIYAADGSTDVYKHINASGEPAIPNIKDLMNPNLPKADLNEVWDAQLQKWRYQCEYLDKWREWEERTGKELDAIIAPVAATAAVRHNQFRYYGYATVFNVLDYTSVVVPVTYADKAVDHRLADYQPVSDMDKAVYAEYDPEVYHGAPVAVQIIGRRLSEERTLAIAEYVGKLLGH</sequence>
<name>AMDS_ASPOR</name>
<reference key="1">
    <citation type="journal article" date="1991" name="Gene">
        <title>Cloning and molecular characterization of the acetamidase-encoding gene (amdS) from Aspergillus oryzae.</title>
        <authorList>
            <person name="Gomi K."/>
            <person name="Kitamoto K."/>
            <person name="Kumagai C."/>
        </authorList>
    </citation>
    <scope>NUCLEOTIDE SEQUENCE [GENOMIC DNA]</scope>
    <source>
        <strain>ATCC 42149 / RIB 40</strain>
    </source>
</reference>
<reference key="2">
    <citation type="journal article" date="2005" name="Nature">
        <title>Genome sequencing and analysis of Aspergillus oryzae.</title>
        <authorList>
            <person name="Machida M."/>
            <person name="Asai K."/>
            <person name="Sano M."/>
            <person name="Tanaka T."/>
            <person name="Kumagai T."/>
            <person name="Terai G."/>
            <person name="Kusumoto K."/>
            <person name="Arima T."/>
            <person name="Akita O."/>
            <person name="Kashiwagi Y."/>
            <person name="Abe K."/>
            <person name="Gomi K."/>
            <person name="Horiuchi H."/>
            <person name="Kitamoto K."/>
            <person name="Kobayashi T."/>
            <person name="Takeuchi M."/>
            <person name="Denning D.W."/>
            <person name="Galagan J.E."/>
            <person name="Nierman W.C."/>
            <person name="Yu J."/>
            <person name="Archer D.B."/>
            <person name="Bennett J.W."/>
            <person name="Bhatnagar D."/>
            <person name="Cleveland T.E."/>
            <person name="Fedorova N.D."/>
            <person name="Gotoh O."/>
            <person name="Horikawa H."/>
            <person name="Hosoyama A."/>
            <person name="Ichinomiya M."/>
            <person name="Igarashi R."/>
            <person name="Iwashita K."/>
            <person name="Juvvadi P.R."/>
            <person name="Kato M."/>
            <person name="Kato Y."/>
            <person name="Kin T."/>
            <person name="Kokubun A."/>
            <person name="Maeda H."/>
            <person name="Maeyama N."/>
            <person name="Maruyama J."/>
            <person name="Nagasaki H."/>
            <person name="Nakajima T."/>
            <person name="Oda K."/>
            <person name="Okada K."/>
            <person name="Paulsen I."/>
            <person name="Sakamoto K."/>
            <person name="Sawano T."/>
            <person name="Takahashi M."/>
            <person name="Takase K."/>
            <person name="Terabayashi Y."/>
            <person name="Wortman J.R."/>
            <person name="Yamada O."/>
            <person name="Yamagata Y."/>
            <person name="Anazawa H."/>
            <person name="Hata Y."/>
            <person name="Koide Y."/>
            <person name="Komori T."/>
            <person name="Koyama Y."/>
            <person name="Minetoki T."/>
            <person name="Suharnan S."/>
            <person name="Tanaka A."/>
            <person name="Isono K."/>
            <person name="Kuhara S."/>
            <person name="Ogasawara N."/>
            <person name="Kikuchi H."/>
        </authorList>
    </citation>
    <scope>NUCLEOTIDE SEQUENCE [LARGE SCALE GENOMIC DNA]</scope>
    <source>
        <strain>ATCC 42149 / RIB 40</strain>
    </source>
</reference>
<proteinExistence type="inferred from homology"/>
<comment type="function">
    <text>Allows acetamide to be used as a sole carbon or nitrogen source.</text>
</comment>
<comment type="catalytic activity">
    <reaction>
        <text>a monocarboxylic acid amide + H2O = a monocarboxylate + NH4(+)</text>
        <dbReference type="Rhea" id="RHEA:12020"/>
        <dbReference type="ChEBI" id="CHEBI:15377"/>
        <dbReference type="ChEBI" id="CHEBI:28938"/>
        <dbReference type="ChEBI" id="CHEBI:35757"/>
        <dbReference type="ChEBI" id="CHEBI:83628"/>
        <dbReference type="EC" id="3.5.1.4"/>
    </reaction>
</comment>
<comment type="catalytic activity">
    <reaction>
        <text>acetamide + H2O = acetate + NH4(+)</text>
        <dbReference type="Rhea" id="RHEA:45048"/>
        <dbReference type="ChEBI" id="CHEBI:15377"/>
        <dbReference type="ChEBI" id="CHEBI:27856"/>
        <dbReference type="ChEBI" id="CHEBI:28938"/>
        <dbReference type="ChEBI" id="CHEBI:30089"/>
        <dbReference type="EC" id="3.5.1.4"/>
    </reaction>
</comment>
<comment type="similarity">
    <text evidence="2">Belongs to the amidase family.</text>
</comment>
<comment type="sequence caution" evidence="2">
    <conflict type="erroneous gene model prediction">
        <sequence resource="EMBL-CDS" id="BAE64001"/>
    </conflict>
</comment>
<keyword id="KW-0378">Hydrolase</keyword>
<keyword id="KW-1185">Reference proteome</keyword>
<feature type="chain" id="PRO_0000105128" description="Acetamidase">
    <location>
        <begin position="1"/>
        <end position="545"/>
    </location>
</feature>
<feature type="active site" description="Charge relay system" evidence="1">
    <location>
        <position position="130"/>
    </location>
</feature>
<feature type="active site" description="Charge relay system" evidence="1">
    <location>
        <position position="205"/>
    </location>
</feature>
<feature type="active site" description="Acyl-ester intermediate" evidence="1">
    <location>
        <position position="229"/>
    </location>
</feature>
<feature type="sequence conflict" description="In Ref. 1; BAA01373." evidence="2" ref="1">
    <original>G</original>
    <variation>D</variation>
    <location>
        <position position="247"/>
    </location>
</feature>
<protein>
    <recommendedName>
        <fullName>Acetamidase</fullName>
        <ecNumber>3.5.1.4</ecNumber>
    </recommendedName>
</protein>
<accession>Q12559</accession>
<accession>Q2U364</accession>
<gene>
    <name type="primary">amdS</name>
    <name type="ORF">AO090038000171</name>
</gene>
<evidence type="ECO:0000250" key="1"/>
<evidence type="ECO:0000305" key="2"/>
<dbReference type="EC" id="3.5.1.4"/>
<dbReference type="EMBL" id="D10492">
    <property type="protein sequence ID" value="BAA01373.1"/>
    <property type="molecule type" value="Genomic_DNA"/>
</dbReference>
<dbReference type="EMBL" id="BA000054">
    <property type="protein sequence ID" value="BAE64001.1"/>
    <property type="status" value="ALT_SEQ"/>
    <property type="molecule type" value="Genomic_DNA"/>
</dbReference>
<dbReference type="PIR" id="JS0633">
    <property type="entry name" value="JS0633"/>
</dbReference>
<dbReference type="RefSeq" id="XP_001825134.2">
    <property type="nucleotide sequence ID" value="XM_001825082.2"/>
</dbReference>
<dbReference type="SMR" id="Q12559"/>
<dbReference type="STRING" id="510516.Q12559"/>
<dbReference type="EnsemblFungi" id="BAE64001">
    <property type="protein sequence ID" value="BAE64001"/>
    <property type="gene ID" value="AO090038000171"/>
</dbReference>
<dbReference type="Proteomes" id="UP000006564">
    <property type="component" value="Chromosome 6"/>
</dbReference>
<dbReference type="GO" id="GO:0004040">
    <property type="term" value="F:amidase activity"/>
    <property type="evidence" value="ECO:0007669"/>
    <property type="project" value="UniProtKB-EC"/>
</dbReference>
<dbReference type="Gene3D" id="3.90.1300.10">
    <property type="entry name" value="Amidase signature (AS) domain"/>
    <property type="match status" value="1"/>
</dbReference>
<dbReference type="InterPro" id="IPR020556">
    <property type="entry name" value="Amidase_CS"/>
</dbReference>
<dbReference type="InterPro" id="IPR023631">
    <property type="entry name" value="Amidase_dom"/>
</dbReference>
<dbReference type="InterPro" id="IPR036928">
    <property type="entry name" value="AS_sf"/>
</dbReference>
<dbReference type="PANTHER" id="PTHR46072:SF9">
    <property type="entry name" value="ACETAMIDASE"/>
    <property type="match status" value="1"/>
</dbReference>
<dbReference type="PANTHER" id="PTHR46072">
    <property type="entry name" value="AMIDASE-RELATED-RELATED"/>
    <property type="match status" value="1"/>
</dbReference>
<dbReference type="Pfam" id="PF01425">
    <property type="entry name" value="Amidase"/>
    <property type="match status" value="1"/>
</dbReference>
<dbReference type="PIRSF" id="PIRSF001221">
    <property type="entry name" value="Amidase_fungi"/>
    <property type="match status" value="1"/>
</dbReference>
<dbReference type="SUPFAM" id="SSF75304">
    <property type="entry name" value="Amidase signature (AS) enzymes"/>
    <property type="match status" value="1"/>
</dbReference>
<dbReference type="PROSITE" id="PS00571">
    <property type="entry name" value="AMIDASES"/>
    <property type="match status" value="1"/>
</dbReference>